<protein>
    <recommendedName>
        <fullName evidence="3">Head completion protein gp16</fullName>
    </recommendedName>
    <alternativeName>
        <fullName>Connector protein gp16</fullName>
    </alternativeName>
    <alternativeName>
        <fullName>Gene product 16</fullName>
        <shortName>Gp16</shortName>
    </alternativeName>
    <alternativeName>
        <fullName>Stopper protein gp16</fullName>
    </alternativeName>
</protein>
<name>HCP16_BPSPP</name>
<comment type="function">
    <text evidence="2">Functions as a stopper that is part of the head-tail connector and that locks the viral DNA in the capsid. Following tail attachment to the entry receptor, seems to open by a diaphragm-like motion, allowing the genome to exit the capsid through the tail tube to the host cell. During assembly, functions as a docking platform which the preassembled tail tapered by the head-tail joining protein gp17 can bind to.</text>
</comment>
<comment type="subunit">
    <text evidence="1 2">Homododecamer (PubMed:25991862). Interacts with the connector protein gp15 (PubMed:25991862). Interacts with the head-tail joining protein gp17 (PubMed:22072538, PubMed:25991862).</text>
</comment>
<comment type="subcellular location">
    <subcellularLocation>
        <location evidence="2">Virion</location>
    </subcellularLocation>
    <text evidence="2">Part of the connector between the portal and the tail.</text>
</comment>
<comment type="similarity">
    <text evidence="3">Belongs to the Caudoviricetes gp7/gp16 head completion protein family.</text>
</comment>
<reference key="1">
    <citation type="journal article" date="1997" name="Gene">
        <title>The complete nucleotide sequence and functional organization of Bacillus subtilis bacteriophage SPP1.</title>
        <authorList>
            <person name="Alonso J.C."/>
            <person name="Luder G."/>
            <person name="Stiege A.C."/>
            <person name="Chai S."/>
            <person name="Weise F."/>
            <person name="Trautner T.A."/>
        </authorList>
    </citation>
    <scope>NUCLEOTIDE SEQUENCE [LARGE SCALE GENOMIC DNA]</scope>
</reference>
<reference key="2">
    <citation type="journal article" date="2012" name="Proteins">
        <title>Solution structure of gp17 from the Siphoviridae bacteriophage SPP1: insights into its role in virion assembly.</title>
        <authorList>
            <person name="Chagot B."/>
            <person name="Auzat I."/>
            <person name="Gallopin M."/>
            <person name="Petitpas I."/>
            <person name="Gilquin B."/>
            <person name="Tavares P."/>
            <person name="Zinn-Justin S."/>
        </authorList>
    </citation>
    <scope>INTERACTION WITH THE HEAD-TAIL JOINING PROTEIN GP17</scope>
</reference>
<reference evidence="4" key="3">
    <citation type="journal article" date="2009" name="Proc. Natl. Acad. Sci. U.S.A.">
        <title>Structure of bacteriophage SPP1 head-to-tail connection reveals mechanism for viral DNA gating.</title>
        <authorList>
            <person name="Lhuillier S."/>
            <person name="Gallopin M."/>
            <person name="Gilquin B."/>
            <person name="Brasiles S."/>
            <person name="Lancelot N."/>
            <person name="Letellier G."/>
            <person name="Gilles M."/>
            <person name="Dethan G."/>
            <person name="Orlova E.V."/>
            <person name="Couprie J."/>
            <person name="Tavares P."/>
            <person name="Zinn-Justin S."/>
        </authorList>
    </citation>
    <scope>STRUCTURE BY NMR</scope>
</reference>
<reference evidence="5 6" key="4">
    <citation type="journal article" date="2015" name="Proc. Natl. Acad. Sci. U.S.A.">
        <title>Structural rearrangements in the phage head-to-tail interface during assembly and infection.</title>
        <authorList>
            <person name="Chaban Y."/>
            <person name="Lurz R."/>
            <person name="Brasiles S."/>
            <person name="Cornilleau C."/>
            <person name="Karreman M."/>
            <person name="Zinn-Justin S."/>
            <person name="Tavares P."/>
            <person name="Orlova E.V."/>
        </authorList>
    </citation>
    <scope>STRUCTURE BY ELECTRON MICROSCOPY (7.20 ANGSTROMS)</scope>
    <scope>SUBCELLULAR LOCATION</scope>
    <scope>INTERACTION WITH THE CONNECTOR PROTEIN GP15</scope>
    <scope>INTERACTION WITH THE HEAD-TAIL JOINING PROTEIN GP17</scope>
    <scope>FUNCTION</scope>
</reference>
<organismHost>
    <name type="scientific">Bacillus subtilis</name>
    <dbReference type="NCBI Taxonomy" id="1423"/>
</organismHost>
<sequence>MYEEFPDVITFQSYVEQSNGEGGKTYKWVDEFTAAAHVQPISQEEYYKAQQLQTPIGYNIYTPYDDRIDKKMRVIYRGKIVTFIGDPVDLSGLQEITRIKGKEDGAYVG</sequence>
<accession>O48446</accession>
<dbReference type="EMBL" id="X97918">
    <property type="protein sequence ID" value="CAA66547.1"/>
    <property type="molecule type" value="Genomic_DNA"/>
</dbReference>
<dbReference type="PIR" id="T42286">
    <property type="entry name" value="T42286"/>
</dbReference>
<dbReference type="RefSeq" id="NP_690677.1">
    <property type="nucleotide sequence ID" value="NC_004166.2"/>
</dbReference>
<dbReference type="PDB" id="2KCA">
    <property type="method" value="NMR"/>
    <property type="chains" value="A=1-109"/>
</dbReference>
<dbReference type="PDB" id="5A20">
    <property type="method" value="EM"/>
    <property type="resolution" value="7.60 A"/>
    <property type="chains" value="E/F=1-109"/>
</dbReference>
<dbReference type="PDB" id="5A21">
    <property type="method" value="EM"/>
    <property type="resolution" value="7.20 A"/>
    <property type="chains" value="E/F=1-109"/>
</dbReference>
<dbReference type="PDB" id="7Z4W">
    <property type="method" value="EM"/>
    <property type="resolution" value="2.70 A"/>
    <property type="chains" value="1/2/3/4/5/6=1-109"/>
</dbReference>
<dbReference type="PDBsum" id="2KCA"/>
<dbReference type="PDBsum" id="5A20"/>
<dbReference type="PDBsum" id="5A21"/>
<dbReference type="PDBsum" id="7Z4W"/>
<dbReference type="EMDB" id="EMD-14509"/>
<dbReference type="EMDB" id="EMD-2993"/>
<dbReference type="EMDB" id="EMD-2994"/>
<dbReference type="SMR" id="O48446"/>
<dbReference type="DIP" id="DIP-48858N"/>
<dbReference type="KEGG" id="vg:955315"/>
<dbReference type="EvolutionaryTrace" id="O48446"/>
<dbReference type="Proteomes" id="UP000002559">
    <property type="component" value="Genome"/>
</dbReference>
<dbReference type="GO" id="GO:0044423">
    <property type="term" value="C:virion component"/>
    <property type="evidence" value="ECO:0007669"/>
    <property type="project" value="UniProtKB-KW"/>
</dbReference>
<dbReference type="GO" id="GO:0099001">
    <property type="term" value="P:symbiont genome ejection through host cell envelope, long flexible tail mechanism"/>
    <property type="evidence" value="ECO:0007669"/>
    <property type="project" value="UniProtKB-KW"/>
</dbReference>
<dbReference type="Gene3D" id="2.40.10.270">
    <property type="entry name" value="Bacteriophage SPP1 head-tail adaptor protein"/>
    <property type="match status" value="1"/>
</dbReference>
<dbReference type="InterPro" id="IPR008767">
    <property type="entry name" value="Phage_SPP1_head-tail_adaptor"/>
</dbReference>
<dbReference type="InterPro" id="IPR038666">
    <property type="entry name" value="SSP1_head-tail_sf"/>
</dbReference>
<dbReference type="NCBIfam" id="TIGR01563">
    <property type="entry name" value="gp16_SPP1"/>
    <property type="match status" value="1"/>
</dbReference>
<dbReference type="Pfam" id="PF05521">
    <property type="entry name" value="Phage_H_T_join"/>
    <property type="match status" value="1"/>
</dbReference>
<proteinExistence type="evidence at protein level"/>
<gene>
    <name type="primary">16</name>
</gene>
<organism>
    <name type="scientific">Bacillus phage SPP1</name>
    <name type="common">Bacteriophage SPP1</name>
    <dbReference type="NCBI Taxonomy" id="10724"/>
    <lineage>
        <taxon>Viruses</taxon>
        <taxon>Duplodnaviria</taxon>
        <taxon>Heunggongvirae</taxon>
        <taxon>Uroviricota</taxon>
        <taxon>Caudoviricetes</taxon>
    </lineage>
</organism>
<evidence type="ECO:0000269" key="1">
    <source>
    </source>
</evidence>
<evidence type="ECO:0000269" key="2">
    <source>
    </source>
</evidence>
<evidence type="ECO:0000305" key="3"/>
<evidence type="ECO:0007744" key="4">
    <source>
        <dbReference type="PDB" id="2KCA"/>
    </source>
</evidence>
<evidence type="ECO:0007744" key="5">
    <source>
        <dbReference type="PDB" id="5A20"/>
    </source>
</evidence>
<evidence type="ECO:0007744" key="6">
    <source>
        <dbReference type="PDB" id="5A21"/>
    </source>
</evidence>
<evidence type="ECO:0007829" key="7">
    <source>
        <dbReference type="PDB" id="2KCA"/>
    </source>
</evidence>
<evidence type="ECO:0007829" key="8">
    <source>
        <dbReference type="PDB" id="7Z4W"/>
    </source>
</evidence>
<feature type="chain" id="PRO_0000438141" description="Head completion protein gp16">
    <location>
        <begin position="1"/>
        <end position="109"/>
    </location>
</feature>
<feature type="strand" evidence="8">
    <location>
        <begin position="7"/>
        <end position="16"/>
    </location>
</feature>
<feature type="strand" evidence="7">
    <location>
        <begin position="18"/>
        <end position="20"/>
    </location>
</feature>
<feature type="strand" evidence="7">
    <location>
        <begin position="23"/>
        <end position="25"/>
    </location>
</feature>
<feature type="strand" evidence="8">
    <location>
        <begin position="26"/>
        <end position="40"/>
    </location>
</feature>
<feature type="helix" evidence="8">
    <location>
        <begin position="43"/>
        <end position="49"/>
    </location>
</feature>
<feature type="strand" evidence="8">
    <location>
        <begin position="52"/>
        <end position="54"/>
    </location>
</feature>
<feature type="strand" evidence="8">
    <location>
        <begin position="58"/>
        <end position="63"/>
    </location>
</feature>
<feature type="strand" evidence="8">
    <location>
        <begin position="73"/>
        <end position="76"/>
    </location>
</feature>
<feature type="strand" evidence="8">
    <location>
        <begin position="79"/>
        <end position="83"/>
    </location>
</feature>
<feature type="helix" evidence="8">
    <location>
        <begin position="90"/>
        <end position="92"/>
    </location>
</feature>
<feature type="strand" evidence="8">
    <location>
        <begin position="93"/>
        <end position="106"/>
    </location>
</feature>
<keyword id="KW-0002">3D-structure</keyword>
<keyword id="KW-1185">Reference proteome</keyword>
<keyword id="KW-1171">Viral genome ejection through host cell envelope</keyword>
<keyword id="KW-1243">Viral long flexible tail ejection system</keyword>
<keyword id="KW-1162">Viral penetration into host cytoplasm</keyword>
<keyword id="KW-0946">Virion</keyword>
<keyword id="KW-1160">Virus entry into host cell</keyword>